<protein>
    <recommendedName>
        <fullName evidence="1">2,3,4,5-tetrahydropyridine-2,6-dicarboxylate N-succinyltransferase</fullName>
        <ecNumber evidence="1">2.3.1.117</ecNumber>
    </recommendedName>
    <alternativeName>
        <fullName evidence="1">Tetrahydrodipicolinate N-succinyltransferase</fullName>
        <shortName evidence="1">THP succinyltransferase</shortName>
        <shortName evidence="1">Tetrahydropicolinate succinylase</shortName>
    </alternativeName>
</protein>
<name>DAPD_ESCF3</name>
<evidence type="ECO:0000255" key="1">
    <source>
        <dbReference type="HAMAP-Rule" id="MF_00811"/>
    </source>
</evidence>
<reference key="1">
    <citation type="journal article" date="2009" name="PLoS Genet.">
        <title>Organised genome dynamics in the Escherichia coli species results in highly diverse adaptive paths.</title>
        <authorList>
            <person name="Touchon M."/>
            <person name="Hoede C."/>
            <person name="Tenaillon O."/>
            <person name="Barbe V."/>
            <person name="Baeriswyl S."/>
            <person name="Bidet P."/>
            <person name="Bingen E."/>
            <person name="Bonacorsi S."/>
            <person name="Bouchier C."/>
            <person name="Bouvet O."/>
            <person name="Calteau A."/>
            <person name="Chiapello H."/>
            <person name="Clermont O."/>
            <person name="Cruveiller S."/>
            <person name="Danchin A."/>
            <person name="Diard M."/>
            <person name="Dossat C."/>
            <person name="Karoui M.E."/>
            <person name="Frapy E."/>
            <person name="Garry L."/>
            <person name="Ghigo J.M."/>
            <person name="Gilles A.M."/>
            <person name="Johnson J."/>
            <person name="Le Bouguenec C."/>
            <person name="Lescat M."/>
            <person name="Mangenot S."/>
            <person name="Martinez-Jehanne V."/>
            <person name="Matic I."/>
            <person name="Nassif X."/>
            <person name="Oztas S."/>
            <person name="Petit M.A."/>
            <person name="Pichon C."/>
            <person name="Rouy Z."/>
            <person name="Ruf C.S."/>
            <person name="Schneider D."/>
            <person name="Tourret J."/>
            <person name="Vacherie B."/>
            <person name="Vallenet D."/>
            <person name="Medigue C."/>
            <person name="Rocha E.P.C."/>
            <person name="Denamur E."/>
        </authorList>
    </citation>
    <scope>NUCLEOTIDE SEQUENCE [LARGE SCALE GENOMIC DNA]</scope>
    <source>
        <strain>ATCC 35469 / DSM 13698 / BCRC 15582 / CCUG 18766 / IAM 14443 / JCM 21226 / LMG 7866 / NBRC 102419 / NCTC 12128 / CDC 0568-73</strain>
    </source>
</reference>
<sequence>MQQLQNIIETAFERRAEITPANADTVTREAVNQVIALLDSGALRVAEKIDGQWVTHQWLKKAVLLSFRINDNQVIEGAESRYFDKVPMKFADYDEARFQKEGFRVVPPAAVRQGAFIARNTVLMPSYVNIGAYVDEGTMVDTWATVGSCAQIGKNVHLSGGVGIGGVLEPLQANPTIIEDNCFIGARSEIVEGVIVEEGSVISMGVYIGQSTKIYDRETGEVHYGRVPAGSVVVSGNLPSKDGKYSLYCAVIVKKVDAKTRGKVGINELLRTID</sequence>
<keyword id="KW-0012">Acyltransferase</keyword>
<keyword id="KW-0028">Amino-acid biosynthesis</keyword>
<keyword id="KW-0963">Cytoplasm</keyword>
<keyword id="KW-0220">Diaminopimelate biosynthesis</keyword>
<keyword id="KW-0457">Lysine biosynthesis</keyword>
<keyword id="KW-0677">Repeat</keyword>
<keyword id="KW-0808">Transferase</keyword>
<comment type="catalytic activity">
    <reaction evidence="1">
        <text>(S)-2,3,4,5-tetrahydrodipicolinate + succinyl-CoA + H2O = (S)-2-succinylamino-6-oxoheptanedioate + CoA</text>
        <dbReference type="Rhea" id="RHEA:17325"/>
        <dbReference type="ChEBI" id="CHEBI:15377"/>
        <dbReference type="ChEBI" id="CHEBI:15685"/>
        <dbReference type="ChEBI" id="CHEBI:16845"/>
        <dbReference type="ChEBI" id="CHEBI:57287"/>
        <dbReference type="ChEBI" id="CHEBI:57292"/>
        <dbReference type="EC" id="2.3.1.117"/>
    </reaction>
</comment>
<comment type="pathway">
    <text evidence="1">Amino-acid biosynthesis; L-lysine biosynthesis via DAP pathway; LL-2,6-diaminopimelate from (S)-tetrahydrodipicolinate (succinylase route): step 1/3.</text>
</comment>
<comment type="subcellular location">
    <subcellularLocation>
        <location evidence="1">Cytoplasm</location>
    </subcellularLocation>
</comment>
<comment type="similarity">
    <text evidence="1">Belongs to the transferase hexapeptide repeat family.</text>
</comment>
<accession>B7LWA5</accession>
<gene>
    <name evidence="1" type="primary">dapD</name>
    <name type="ordered locus">EFER_0188</name>
</gene>
<feature type="chain" id="PRO_1000134050" description="2,3,4,5-tetrahydropyridine-2,6-dicarboxylate N-succinyltransferase">
    <location>
        <begin position="1"/>
        <end position="274"/>
    </location>
</feature>
<proteinExistence type="inferred from homology"/>
<dbReference type="EC" id="2.3.1.117" evidence="1"/>
<dbReference type="EMBL" id="CU928158">
    <property type="protein sequence ID" value="CAQ87769.1"/>
    <property type="molecule type" value="Genomic_DNA"/>
</dbReference>
<dbReference type="RefSeq" id="WP_001186646.1">
    <property type="nucleotide sequence ID" value="NC_011740.1"/>
</dbReference>
<dbReference type="SMR" id="B7LWA5"/>
<dbReference type="GeneID" id="75058727"/>
<dbReference type="KEGG" id="efe:EFER_0188"/>
<dbReference type="HOGENOM" id="CLU_050859_0_1_6"/>
<dbReference type="OrthoDB" id="9775362at2"/>
<dbReference type="UniPathway" id="UPA00034">
    <property type="reaction ID" value="UER00019"/>
</dbReference>
<dbReference type="Proteomes" id="UP000000745">
    <property type="component" value="Chromosome"/>
</dbReference>
<dbReference type="GO" id="GO:0005737">
    <property type="term" value="C:cytoplasm"/>
    <property type="evidence" value="ECO:0007669"/>
    <property type="project" value="UniProtKB-SubCell"/>
</dbReference>
<dbReference type="GO" id="GO:0008666">
    <property type="term" value="F:2,3,4,5-tetrahydropyridine-2,6-dicarboxylate N-succinyltransferase activity"/>
    <property type="evidence" value="ECO:0007669"/>
    <property type="project" value="UniProtKB-UniRule"/>
</dbReference>
<dbReference type="GO" id="GO:0016779">
    <property type="term" value="F:nucleotidyltransferase activity"/>
    <property type="evidence" value="ECO:0007669"/>
    <property type="project" value="TreeGrafter"/>
</dbReference>
<dbReference type="GO" id="GO:0019877">
    <property type="term" value="P:diaminopimelate biosynthetic process"/>
    <property type="evidence" value="ECO:0007669"/>
    <property type="project" value="UniProtKB-UniRule"/>
</dbReference>
<dbReference type="GO" id="GO:0009089">
    <property type="term" value="P:lysine biosynthetic process via diaminopimelate"/>
    <property type="evidence" value="ECO:0007669"/>
    <property type="project" value="UniProtKB-UniRule"/>
</dbReference>
<dbReference type="CDD" id="cd03350">
    <property type="entry name" value="LbH_THP_succinylT"/>
    <property type="match status" value="1"/>
</dbReference>
<dbReference type="FunFam" id="1.10.166.10:FF:000001">
    <property type="entry name" value="2,3,4,5-tetrahydropyridine-2,6-dicarboxylate N-succinyltransferase"/>
    <property type="match status" value="1"/>
</dbReference>
<dbReference type="FunFam" id="2.160.10.10:FF:000004">
    <property type="entry name" value="2,3,4,5-tetrahydropyridine-2,6-dicarboxylate N-succinyltransferase"/>
    <property type="match status" value="1"/>
</dbReference>
<dbReference type="Gene3D" id="2.160.10.10">
    <property type="entry name" value="Hexapeptide repeat proteins"/>
    <property type="match status" value="1"/>
</dbReference>
<dbReference type="Gene3D" id="1.10.166.10">
    <property type="entry name" value="Tetrahydrodipicolinate-N-succinyltransferase, N-terminal domain"/>
    <property type="match status" value="1"/>
</dbReference>
<dbReference type="HAMAP" id="MF_00811">
    <property type="entry name" value="DapD"/>
    <property type="match status" value="1"/>
</dbReference>
<dbReference type="InterPro" id="IPR005664">
    <property type="entry name" value="DapD_Trfase_Hexpep_rpt_fam"/>
</dbReference>
<dbReference type="InterPro" id="IPR001451">
    <property type="entry name" value="Hexapep"/>
</dbReference>
<dbReference type="InterPro" id="IPR018357">
    <property type="entry name" value="Hexapep_transf_CS"/>
</dbReference>
<dbReference type="InterPro" id="IPR023180">
    <property type="entry name" value="THP_succinylTrfase_dom1"/>
</dbReference>
<dbReference type="InterPro" id="IPR037133">
    <property type="entry name" value="THP_succinylTrfase_N_sf"/>
</dbReference>
<dbReference type="InterPro" id="IPR011004">
    <property type="entry name" value="Trimer_LpxA-like_sf"/>
</dbReference>
<dbReference type="NCBIfam" id="TIGR00965">
    <property type="entry name" value="dapD"/>
    <property type="match status" value="1"/>
</dbReference>
<dbReference type="NCBIfam" id="NF008808">
    <property type="entry name" value="PRK11830.1"/>
    <property type="match status" value="1"/>
</dbReference>
<dbReference type="PANTHER" id="PTHR19136:SF52">
    <property type="entry name" value="2,3,4,5-TETRAHYDROPYRIDINE-2,6-DICARBOXYLATE N-SUCCINYLTRANSFERASE"/>
    <property type="match status" value="1"/>
</dbReference>
<dbReference type="PANTHER" id="PTHR19136">
    <property type="entry name" value="MOLYBDENUM COFACTOR GUANYLYLTRANSFERASE"/>
    <property type="match status" value="1"/>
</dbReference>
<dbReference type="Pfam" id="PF14602">
    <property type="entry name" value="Hexapep_2"/>
    <property type="match status" value="1"/>
</dbReference>
<dbReference type="Pfam" id="PF14805">
    <property type="entry name" value="THDPS_N_2"/>
    <property type="match status" value="1"/>
</dbReference>
<dbReference type="SUPFAM" id="SSF51161">
    <property type="entry name" value="Trimeric LpxA-like enzymes"/>
    <property type="match status" value="1"/>
</dbReference>
<dbReference type="PROSITE" id="PS00101">
    <property type="entry name" value="HEXAPEP_TRANSFERASES"/>
    <property type="match status" value="1"/>
</dbReference>
<organism>
    <name type="scientific">Escherichia fergusonii (strain ATCC 35469 / DSM 13698 / CCUG 18766 / IAM 14443 / JCM 21226 / LMG 7866 / NBRC 102419 / NCTC 12128 / CDC 0568-73)</name>
    <dbReference type="NCBI Taxonomy" id="585054"/>
    <lineage>
        <taxon>Bacteria</taxon>
        <taxon>Pseudomonadati</taxon>
        <taxon>Pseudomonadota</taxon>
        <taxon>Gammaproteobacteria</taxon>
        <taxon>Enterobacterales</taxon>
        <taxon>Enterobacteriaceae</taxon>
        <taxon>Escherichia</taxon>
    </lineage>
</organism>